<sequence>MIRTMLQGKLHRVKVTHADLHYEGSCAIDQDFLDAAGILENEAIDIWNVTNGKRFSTYAIAAERGSRIISVNGAAAHCASVGDIVIIASFVTMPDEEARTWRPNVAYFEGDNEMKRTAKAIPVQVA</sequence>
<name>PAND_SHIDS</name>
<dbReference type="EC" id="4.1.1.11" evidence="1"/>
<dbReference type="EMBL" id="CP000034">
    <property type="protein sequence ID" value="ABB60279.1"/>
    <property type="molecule type" value="Genomic_DNA"/>
</dbReference>
<dbReference type="RefSeq" id="WP_000621515.1">
    <property type="nucleotide sequence ID" value="NC_007606.1"/>
</dbReference>
<dbReference type="RefSeq" id="YP_401768.1">
    <property type="nucleotide sequence ID" value="NC_007606.1"/>
</dbReference>
<dbReference type="SMR" id="Q32K78"/>
<dbReference type="STRING" id="300267.SDY_0041"/>
<dbReference type="EnsemblBacteria" id="ABB60279">
    <property type="protein sequence ID" value="ABB60279"/>
    <property type="gene ID" value="SDY_0041"/>
</dbReference>
<dbReference type="GeneID" id="93777305"/>
<dbReference type="KEGG" id="sdy:SDY_0041"/>
<dbReference type="PATRIC" id="fig|300267.13.peg.45"/>
<dbReference type="HOGENOM" id="CLU_115305_2_1_6"/>
<dbReference type="UniPathway" id="UPA00028">
    <property type="reaction ID" value="UER00002"/>
</dbReference>
<dbReference type="Proteomes" id="UP000002716">
    <property type="component" value="Chromosome"/>
</dbReference>
<dbReference type="GO" id="GO:0005829">
    <property type="term" value="C:cytosol"/>
    <property type="evidence" value="ECO:0007669"/>
    <property type="project" value="TreeGrafter"/>
</dbReference>
<dbReference type="GO" id="GO:0004068">
    <property type="term" value="F:aspartate 1-decarboxylase activity"/>
    <property type="evidence" value="ECO:0007669"/>
    <property type="project" value="UniProtKB-UniRule"/>
</dbReference>
<dbReference type="GO" id="GO:0006523">
    <property type="term" value="P:alanine biosynthetic process"/>
    <property type="evidence" value="ECO:0007669"/>
    <property type="project" value="InterPro"/>
</dbReference>
<dbReference type="GO" id="GO:0015940">
    <property type="term" value="P:pantothenate biosynthetic process"/>
    <property type="evidence" value="ECO:0007669"/>
    <property type="project" value="UniProtKB-UniRule"/>
</dbReference>
<dbReference type="CDD" id="cd06919">
    <property type="entry name" value="Asp_decarbox"/>
    <property type="match status" value="1"/>
</dbReference>
<dbReference type="FunFam" id="2.40.40.20:FF:000004">
    <property type="entry name" value="Aspartate 1-decarboxylase"/>
    <property type="match status" value="1"/>
</dbReference>
<dbReference type="Gene3D" id="2.40.40.20">
    <property type="match status" value="1"/>
</dbReference>
<dbReference type="HAMAP" id="MF_00446">
    <property type="entry name" value="PanD"/>
    <property type="match status" value="1"/>
</dbReference>
<dbReference type="InterPro" id="IPR009010">
    <property type="entry name" value="Asp_de-COase-like_dom_sf"/>
</dbReference>
<dbReference type="InterPro" id="IPR003190">
    <property type="entry name" value="Asp_decarbox"/>
</dbReference>
<dbReference type="NCBIfam" id="TIGR00223">
    <property type="entry name" value="panD"/>
    <property type="match status" value="1"/>
</dbReference>
<dbReference type="PANTHER" id="PTHR21012">
    <property type="entry name" value="ASPARTATE 1-DECARBOXYLASE"/>
    <property type="match status" value="1"/>
</dbReference>
<dbReference type="PANTHER" id="PTHR21012:SF0">
    <property type="entry name" value="ASPARTATE 1-DECARBOXYLASE"/>
    <property type="match status" value="1"/>
</dbReference>
<dbReference type="Pfam" id="PF02261">
    <property type="entry name" value="Asp_decarbox"/>
    <property type="match status" value="1"/>
</dbReference>
<dbReference type="PIRSF" id="PIRSF006246">
    <property type="entry name" value="Asp_decarbox"/>
    <property type="match status" value="1"/>
</dbReference>
<dbReference type="SUPFAM" id="SSF50692">
    <property type="entry name" value="ADC-like"/>
    <property type="match status" value="1"/>
</dbReference>
<reference key="1">
    <citation type="journal article" date="2005" name="Nucleic Acids Res.">
        <title>Genome dynamics and diversity of Shigella species, the etiologic agents of bacillary dysentery.</title>
        <authorList>
            <person name="Yang F."/>
            <person name="Yang J."/>
            <person name="Zhang X."/>
            <person name="Chen L."/>
            <person name="Jiang Y."/>
            <person name="Yan Y."/>
            <person name="Tang X."/>
            <person name="Wang J."/>
            <person name="Xiong Z."/>
            <person name="Dong J."/>
            <person name="Xue Y."/>
            <person name="Zhu Y."/>
            <person name="Xu X."/>
            <person name="Sun L."/>
            <person name="Chen S."/>
            <person name="Nie H."/>
            <person name="Peng J."/>
            <person name="Xu J."/>
            <person name="Wang Y."/>
            <person name="Yuan Z."/>
            <person name="Wen Y."/>
            <person name="Yao Z."/>
            <person name="Shen Y."/>
            <person name="Qiang B."/>
            <person name="Hou Y."/>
            <person name="Yu J."/>
            <person name="Jin Q."/>
        </authorList>
    </citation>
    <scope>NUCLEOTIDE SEQUENCE [LARGE SCALE GENOMIC DNA]</scope>
    <source>
        <strain>Sd197</strain>
    </source>
</reference>
<protein>
    <recommendedName>
        <fullName evidence="1">Aspartate 1-decarboxylase</fullName>
        <ecNumber evidence="1">4.1.1.11</ecNumber>
    </recommendedName>
    <alternativeName>
        <fullName evidence="1">Aspartate alpha-decarboxylase</fullName>
    </alternativeName>
    <component>
        <recommendedName>
            <fullName evidence="1">Aspartate 1-decarboxylase beta chain</fullName>
        </recommendedName>
    </component>
    <component>
        <recommendedName>
            <fullName evidence="1">Aspartate 1-decarboxylase alpha chain</fullName>
        </recommendedName>
    </component>
</protein>
<proteinExistence type="inferred from homology"/>
<feature type="chain" id="PRO_0000236891" description="Aspartate 1-decarboxylase beta chain" evidence="1">
    <location>
        <begin position="1"/>
        <end position="24"/>
    </location>
</feature>
<feature type="chain" id="PRO_0000236892" description="Aspartate 1-decarboxylase alpha chain" evidence="1">
    <location>
        <begin position="25"/>
        <end position="126"/>
    </location>
</feature>
<feature type="active site" description="Schiff-base intermediate with substrate; via pyruvic acid" evidence="1">
    <location>
        <position position="25"/>
    </location>
</feature>
<feature type="active site" description="Proton donor" evidence="1">
    <location>
        <position position="58"/>
    </location>
</feature>
<feature type="binding site" evidence="1">
    <location>
        <position position="57"/>
    </location>
    <ligand>
        <name>substrate</name>
    </ligand>
</feature>
<feature type="binding site" evidence="1">
    <location>
        <begin position="73"/>
        <end position="75"/>
    </location>
    <ligand>
        <name>substrate</name>
    </ligand>
</feature>
<feature type="modified residue" description="Pyruvic acid (Ser)" evidence="1">
    <location>
        <position position="25"/>
    </location>
</feature>
<keyword id="KW-0068">Autocatalytic cleavage</keyword>
<keyword id="KW-0963">Cytoplasm</keyword>
<keyword id="KW-0210">Decarboxylase</keyword>
<keyword id="KW-0456">Lyase</keyword>
<keyword id="KW-0566">Pantothenate biosynthesis</keyword>
<keyword id="KW-0670">Pyruvate</keyword>
<keyword id="KW-1185">Reference proteome</keyword>
<keyword id="KW-0704">Schiff base</keyword>
<keyword id="KW-0865">Zymogen</keyword>
<accession>Q32K78</accession>
<comment type="function">
    <text evidence="1">Catalyzes the pyruvoyl-dependent decarboxylation of aspartate to produce beta-alanine.</text>
</comment>
<comment type="catalytic activity">
    <reaction evidence="1">
        <text>L-aspartate + H(+) = beta-alanine + CO2</text>
        <dbReference type="Rhea" id="RHEA:19497"/>
        <dbReference type="ChEBI" id="CHEBI:15378"/>
        <dbReference type="ChEBI" id="CHEBI:16526"/>
        <dbReference type="ChEBI" id="CHEBI:29991"/>
        <dbReference type="ChEBI" id="CHEBI:57966"/>
        <dbReference type="EC" id="4.1.1.11"/>
    </reaction>
</comment>
<comment type="cofactor">
    <cofactor evidence="1">
        <name>pyruvate</name>
        <dbReference type="ChEBI" id="CHEBI:15361"/>
    </cofactor>
    <text evidence="1">Binds 1 pyruvoyl group covalently per subunit.</text>
</comment>
<comment type="pathway">
    <text evidence="1">Cofactor biosynthesis; (R)-pantothenate biosynthesis; beta-alanine from L-aspartate: step 1/1.</text>
</comment>
<comment type="subunit">
    <text evidence="1">Heterooctamer of four alpha and four beta subunits.</text>
</comment>
<comment type="subcellular location">
    <subcellularLocation>
        <location evidence="1">Cytoplasm</location>
    </subcellularLocation>
</comment>
<comment type="PTM">
    <text evidence="1">Is synthesized initially as an inactive proenzyme, which is activated by self-cleavage at a specific serine bond to produce a beta-subunit with a hydroxyl group at its C-terminus and an alpha-subunit with a pyruvoyl group at its N-terminus.</text>
</comment>
<comment type="similarity">
    <text evidence="1">Belongs to the PanD family.</text>
</comment>
<organism>
    <name type="scientific">Shigella dysenteriae serotype 1 (strain Sd197)</name>
    <dbReference type="NCBI Taxonomy" id="300267"/>
    <lineage>
        <taxon>Bacteria</taxon>
        <taxon>Pseudomonadati</taxon>
        <taxon>Pseudomonadota</taxon>
        <taxon>Gammaproteobacteria</taxon>
        <taxon>Enterobacterales</taxon>
        <taxon>Enterobacteriaceae</taxon>
        <taxon>Shigella</taxon>
    </lineage>
</organism>
<gene>
    <name evidence="1" type="primary">panD</name>
    <name type="ordered locus">SDY_0041</name>
</gene>
<evidence type="ECO:0000255" key="1">
    <source>
        <dbReference type="HAMAP-Rule" id="MF_00446"/>
    </source>
</evidence>